<protein>
    <recommendedName>
        <fullName evidence="1">Isopentenyl-diphosphate Delta-isomerase</fullName>
        <shortName evidence="1">IPP isomerase</shortName>
        <ecNumber evidence="1">5.3.3.2</ecNumber>
    </recommendedName>
    <alternativeName>
        <fullName evidence="1">IPP:DMAPP isomerase</fullName>
    </alternativeName>
    <alternativeName>
        <fullName evidence="1">Isopentenyl pyrophosphate isomerase</fullName>
    </alternativeName>
</protein>
<sequence>MQTEHVILLNAQGVPTGTLEKYAAHTADTRLHLAFSSWLFNAKGQLLVTRRALSKKAWPGVWTNSVCGHPQLGESNEDAVIRRCRYELGVEITPPESIYPDFRYRATDPSGIVENEVCPVFAARTTSALQINDDEVMDYQWCDLADVLHGIDATPWAFSPWMVMQATNREARKRLSAFTQLK</sequence>
<keyword id="KW-0963">Cytoplasm</keyword>
<keyword id="KW-0413">Isomerase</keyword>
<keyword id="KW-0414">Isoprene biosynthesis</keyword>
<keyword id="KW-0460">Magnesium</keyword>
<keyword id="KW-0464">Manganese</keyword>
<keyword id="KW-0479">Metal-binding</keyword>
<gene>
    <name evidence="1" type="primary">idi</name>
    <name type="ordered locus">BWG_2614</name>
</gene>
<comment type="function">
    <text evidence="1">Catalyzes the 1,3-allylic rearrangement of the homoallylic substrate isopentenyl (IPP) to its highly electrophilic allylic isomer, dimethylallyl diphosphate (DMAPP).</text>
</comment>
<comment type="catalytic activity">
    <reaction evidence="1">
        <text>isopentenyl diphosphate = dimethylallyl diphosphate</text>
        <dbReference type="Rhea" id="RHEA:23284"/>
        <dbReference type="ChEBI" id="CHEBI:57623"/>
        <dbReference type="ChEBI" id="CHEBI:128769"/>
        <dbReference type="EC" id="5.3.3.2"/>
    </reaction>
</comment>
<comment type="cofactor">
    <cofactor evidence="1">
        <name>Mg(2+)</name>
        <dbReference type="ChEBI" id="CHEBI:18420"/>
    </cofactor>
    <text evidence="1">Binds 1 Mg(2+) ion per subunit. The magnesium ion binds only when substrate is bound.</text>
</comment>
<comment type="cofactor">
    <cofactor evidence="1">
        <name>Mn(2+)</name>
        <dbReference type="ChEBI" id="CHEBI:29035"/>
    </cofactor>
    <text evidence="1">Binds 1 Mn(2+) ion per subunit.</text>
</comment>
<comment type="pathway">
    <text evidence="1">Isoprenoid biosynthesis; dimethylallyl diphosphate biosynthesis; dimethylallyl diphosphate from isopentenyl diphosphate: step 1/1.</text>
</comment>
<comment type="subunit">
    <text evidence="1">Homodimer.</text>
</comment>
<comment type="subcellular location">
    <subcellularLocation>
        <location evidence="1">Cytoplasm</location>
    </subcellularLocation>
</comment>
<comment type="similarity">
    <text evidence="1">Belongs to the IPP isomerase type 1 family.</text>
</comment>
<organism>
    <name type="scientific">Escherichia coli (strain K12 / MC4100 / BW2952)</name>
    <dbReference type="NCBI Taxonomy" id="595496"/>
    <lineage>
        <taxon>Bacteria</taxon>
        <taxon>Pseudomonadati</taxon>
        <taxon>Pseudomonadota</taxon>
        <taxon>Gammaproteobacteria</taxon>
        <taxon>Enterobacterales</taxon>
        <taxon>Enterobacteriaceae</taxon>
        <taxon>Escherichia</taxon>
    </lineage>
</organism>
<reference key="1">
    <citation type="journal article" date="2009" name="J. Bacteriol.">
        <title>Genomic sequencing reveals regulatory mutations and recombinational events in the widely used MC4100 lineage of Escherichia coli K-12.</title>
        <authorList>
            <person name="Ferenci T."/>
            <person name="Zhou Z."/>
            <person name="Betteridge T."/>
            <person name="Ren Y."/>
            <person name="Liu Y."/>
            <person name="Feng L."/>
            <person name="Reeves P.R."/>
            <person name="Wang L."/>
        </authorList>
    </citation>
    <scope>NUCLEOTIDE SEQUENCE [LARGE SCALE GENOMIC DNA]</scope>
    <source>
        <strain>K12 / MC4100 / BW2952</strain>
    </source>
</reference>
<proteinExistence type="inferred from homology"/>
<name>IDI_ECOBW</name>
<dbReference type="EC" id="5.3.3.2" evidence="1"/>
<dbReference type="EMBL" id="CP001396">
    <property type="protein sequence ID" value="ACR63563.1"/>
    <property type="molecule type" value="Genomic_DNA"/>
</dbReference>
<dbReference type="RefSeq" id="WP_001192820.1">
    <property type="nucleotide sequence ID" value="NC_012759.1"/>
</dbReference>
<dbReference type="SMR" id="C5A0G1"/>
<dbReference type="KEGG" id="ebw:BWG_2614"/>
<dbReference type="HOGENOM" id="CLU_060552_2_0_6"/>
<dbReference type="UniPathway" id="UPA00059">
    <property type="reaction ID" value="UER00104"/>
</dbReference>
<dbReference type="GO" id="GO:0005737">
    <property type="term" value="C:cytoplasm"/>
    <property type="evidence" value="ECO:0007669"/>
    <property type="project" value="UniProtKB-SubCell"/>
</dbReference>
<dbReference type="GO" id="GO:0004452">
    <property type="term" value="F:isopentenyl-diphosphate delta-isomerase activity"/>
    <property type="evidence" value="ECO:0007669"/>
    <property type="project" value="UniProtKB-UniRule"/>
</dbReference>
<dbReference type="GO" id="GO:0046872">
    <property type="term" value="F:metal ion binding"/>
    <property type="evidence" value="ECO:0007669"/>
    <property type="project" value="UniProtKB-KW"/>
</dbReference>
<dbReference type="GO" id="GO:0050992">
    <property type="term" value="P:dimethylallyl diphosphate biosynthetic process"/>
    <property type="evidence" value="ECO:0007669"/>
    <property type="project" value="UniProtKB-UniRule"/>
</dbReference>
<dbReference type="GO" id="GO:0008299">
    <property type="term" value="P:isoprenoid biosynthetic process"/>
    <property type="evidence" value="ECO:0007669"/>
    <property type="project" value="UniProtKB-KW"/>
</dbReference>
<dbReference type="CDD" id="cd02885">
    <property type="entry name" value="NUDIX_IPP_Isomerase"/>
    <property type="match status" value="1"/>
</dbReference>
<dbReference type="FunFam" id="3.90.79.10:FF:000009">
    <property type="entry name" value="Isopentenyl-diphosphate Delta-isomerase"/>
    <property type="match status" value="1"/>
</dbReference>
<dbReference type="Gene3D" id="3.90.79.10">
    <property type="entry name" value="Nucleoside Triphosphate Pyrophosphohydrolase"/>
    <property type="match status" value="1"/>
</dbReference>
<dbReference type="HAMAP" id="MF_00202">
    <property type="entry name" value="Idi"/>
    <property type="match status" value="1"/>
</dbReference>
<dbReference type="InterPro" id="IPR056375">
    <property type="entry name" value="Idi_bact"/>
</dbReference>
<dbReference type="InterPro" id="IPR011876">
    <property type="entry name" value="IsopentenylPP_isomerase_typ1"/>
</dbReference>
<dbReference type="InterPro" id="IPR015797">
    <property type="entry name" value="NUDIX_hydrolase-like_dom_sf"/>
</dbReference>
<dbReference type="InterPro" id="IPR000086">
    <property type="entry name" value="NUDIX_hydrolase_dom"/>
</dbReference>
<dbReference type="NCBIfam" id="TIGR02150">
    <property type="entry name" value="IPP_isom_1"/>
    <property type="match status" value="1"/>
</dbReference>
<dbReference type="NCBIfam" id="NF002995">
    <property type="entry name" value="PRK03759.1"/>
    <property type="match status" value="1"/>
</dbReference>
<dbReference type="PANTHER" id="PTHR10885">
    <property type="entry name" value="ISOPENTENYL-DIPHOSPHATE DELTA-ISOMERASE"/>
    <property type="match status" value="1"/>
</dbReference>
<dbReference type="PANTHER" id="PTHR10885:SF0">
    <property type="entry name" value="ISOPENTENYL-DIPHOSPHATE DELTA-ISOMERASE"/>
    <property type="match status" value="1"/>
</dbReference>
<dbReference type="Pfam" id="PF00293">
    <property type="entry name" value="NUDIX"/>
    <property type="match status" value="1"/>
</dbReference>
<dbReference type="PIRSF" id="PIRSF018427">
    <property type="entry name" value="Isopntndiph_ism"/>
    <property type="match status" value="1"/>
</dbReference>
<dbReference type="SUPFAM" id="SSF55811">
    <property type="entry name" value="Nudix"/>
    <property type="match status" value="1"/>
</dbReference>
<dbReference type="PROSITE" id="PS51462">
    <property type="entry name" value="NUDIX"/>
    <property type="match status" value="1"/>
</dbReference>
<evidence type="ECO:0000255" key="1">
    <source>
        <dbReference type="HAMAP-Rule" id="MF_00202"/>
    </source>
</evidence>
<feature type="chain" id="PRO_1000204112" description="Isopentenyl-diphosphate Delta-isomerase">
    <location>
        <begin position="1"/>
        <end position="182"/>
    </location>
</feature>
<feature type="active site" evidence="1">
    <location>
        <position position="67"/>
    </location>
</feature>
<feature type="active site" evidence="1">
    <location>
        <position position="116"/>
    </location>
</feature>
<feature type="binding site" evidence="1">
    <location>
        <position position="25"/>
    </location>
    <ligand>
        <name>Mn(2+)</name>
        <dbReference type="ChEBI" id="CHEBI:29035"/>
    </ligand>
</feature>
<feature type="binding site" evidence="1">
    <location>
        <position position="32"/>
    </location>
    <ligand>
        <name>Mn(2+)</name>
        <dbReference type="ChEBI" id="CHEBI:29035"/>
    </ligand>
</feature>
<feature type="binding site" evidence="1">
    <location>
        <position position="69"/>
    </location>
    <ligand>
        <name>Mn(2+)</name>
        <dbReference type="ChEBI" id="CHEBI:29035"/>
    </ligand>
</feature>
<feature type="binding site" evidence="1">
    <location>
        <position position="87"/>
    </location>
    <ligand>
        <name>Mg(2+)</name>
        <dbReference type="ChEBI" id="CHEBI:18420"/>
    </ligand>
</feature>
<feature type="binding site" evidence="1">
    <location>
        <position position="114"/>
    </location>
    <ligand>
        <name>Mn(2+)</name>
        <dbReference type="ChEBI" id="CHEBI:29035"/>
    </ligand>
</feature>
<feature type="binding site" evidence="1">
    <location>
        <position position="116"/>
    </location>
    <ligand>
        <name>Mn(2+)</name>
        <dbReference type="ChEBI" id="CHEBI:29035"/>
    </ligand>
</feature>
<accession>C5A0G1</accession>